<proteinExistence type="evidence at protein level"/>
<protein>
    <recommendedName>
        <fullName>Early E1A protein</fullName>
    </recommendedName>
    <alternativeName>
        <fullName>Early E1A 29.5 kDa protein</fullName>
    </alternativeName>
</protein>
<organismHost>
    <name type="scientific">Homo sapiens</name>
    <name type="common">Human</name>
    <dbReference type="NCBI Taxonomy" id="9606"/>
</organismHost>
<comment type="function">
    <text evidence="3">Plays a role in viral genome replication by driving entry of quiescent cells into the cell cycle. Stimulation of progression from G1 to S phase allows the virus to efficiently use the cellular DNA replicating machinery to achieve viral genome replication. E1A protein has both transforming and trans-activating activities. Induces the disassembly of the E2F1 transcription factor from RB1 by direct competition for the same binding site on RB1, with subsequent transcriptional activation of E2F1-regulated S-phase genes and of the E2 region of the adenoviral genome. Release of E2F1 leads to the ARF-mediated inhibition of MDM2 and causes TP53/p53 to accumulate because it is not targeted for degradation by MDM2-mediated ubiquitination anymore. This increase in TP53, in turn, would arrest the cell proliferation and direct its death but this effect is counteracted by the viral protein E1B-55K. Inactivation of the ability of RB1 to arrest the cell cycle is critical for cellular transformation, uncontrolled cellular growth and proliferation induced by viral infection. Interaction with RBX1 and CUL1 inhibits ubiquitination of the proteins targeted by SCF(FBXW7) ubiquitin ligase complex, and may be linked to unregulated host cell proliferation. The tumorigenesis-restraining activity of E1A may be related to the disruption of the host CtBP-CtIP complex through the CtBP binding motif. Interaction with host TMEM173/STING impairs the ability of TMEM173/STING to sense cytosolic DNA and promote the production of type I interferon (IFN-alpha and IFN-beta). Promotes the sumoylation of host ZBED1/hDREF with SUMO1 (By similarity).</text>
</comment>
<comment type="subunit">
    <text evidence="2 3 6 7">Interacts with host UBE2I; this interaction interferes with polySUMOylation (PubMed:8824223). Interacts with host RB1; this interaction induces the aberrant dissociation of RB1-E2F1 complex thereby disrupting the activity of RB1 and activating E2F1-regulated genes. Interacts with host ATF7; the interaction enhances ATF7-mediated viral transactivation activity which requires the zinc binding domains of both proteins. Isoform early E1A 32 kDa protein and isoform early E1A 26 kDa protein interact (via N-terminus) with CUL1 and E3 ubiquitin ligase RBX1; these interactions inhibit RBX1-CUL1-dependent elongation reaction of ubiquitin chains and attenuate ubiquitination of SCF(FBXW7) target proteins. Interacts (via PXLXP motif) with host ZMYND11/BS69 (via MYND-type zinc finger); this interaction inhibits E1A mediated transactivation. Interacts with host EP300; this interaction stimulates the acetylation of RB1 by recruiting EP300 and RB1 into a multimeric-protein complex. Interacts with host CTBP1 and CTBP2; this interaction seems to potentiate viral replication. Interacts with host DCAF7. Interacts with host DYRK1A. Interacts with host KPNA4; this interaction allows E1A import into the host nucleus. Interacts with host EP400; this interaction stabilizes MYC. Interacts with host TBP protein; this interaction probably disrupts the TBP-TATA complex. Interacts (via LXCXE motif) with host TMEM173/STING; this interaction impairs the ability of TMEM173/STING to sense cytosolic DNA and promote the production of type I interferon (IFN-alpha and IFN-beta). Interacts (via C-terminus) with host ZBED1/hDREF (via C-terminus); the interaction is direct (PubMed:25210186).</text>
</comment>
<comment type="interaction">
    <interactant intactId="EBI-6947456">
        <id>P03259</id>
    </interactant>
    <interactant intactId="EBI-7796656">
        <id>O08769</id>
        <label>Cdkn1b</label>
    </interactant>
    <organismsDiffer>true</organismsDiffer>
    <experiments>2</experiments>
</comment>
<comment type="interaction">
    <interactant intactId="EBI-6947456">
        <id>P03259</id>
    </interactant>
    <interactant intactId="EBI-81215">
        <id>Q92793</id>
        <label>CREBBP</label>
    </interactant>
    <organismsDiffer>true</organismsDiffer>
    <experiments>5</experiments>
</comment>
<comment type="interaction">
    <interactant intactId="EBI-6947456">
        <id>P03259</id>
    </interactant>
    <interactant intactId="EBI-447295">
        <id>Q09472</id>
        <label>EP300</label>
    </interactant>
    <organismsDiffer>true</organismsDiffer>
    <experiments>3</experiments>
</comment>
<comment type="interaction">
    <interactant intactId="EBI-6947456">
        <id>P03259</id>
    </interactant>
    <interactant intactId="EBI-475687">
        <id>Q01860</id>
        <label>POU5F1</label>
    </interactant>
    <organismsDiffer>true</organismsDiffer>
    <experiments>2</experiments>
</comment>
<comment type="interaction">
    <interactant intactId="EBI-6947456">
        <id>P03259</id>
    </interactant>
    <interactant intactId="EBI-765538">
        <id>P25490</id>
        <label>YY1</label>
    </interactant>
    <organismsDiffer>true</organismsDiffer>
    <experiments>3</experiments>
</comment>
<comment type="interaction">
    <interactant intactId="EBI-7225021">
        <id>P03259-2</id>
    </interactant>
    <interactant intactId="EBI-852794">
        <id>P18846</id>
        <label>ATF1</label>
    </interactant>
    <organismsDiffer>true</organismsDiffer>
    <experiments>2</experiments>
</comment>
<comment type="interaction">
    <interactant intactId="EBI-7225021">
        <id>P03259-2</id>
    </interactant>
    <interactant intactId="EBI-711855">
        <id>P16220</id>
        <label>CREB1</label>
    </interactant>
    <organismsDiffer>true</organismsDiffer>
    <experiments>2</experiments>
</comment>
<comment type="interaction">
    <interactant intactId="EBI-7225021">
        <id>P03259-2</id>
    </interactant>
    <interactant intactId="EBI-81215">
        <id>Q92793</id>
        <label>CREBBP</label>
    </interactant>
    <organismsDiffer>true</organismsDiffer>
    <experiments>3</experiments>
</comment>
<comment type="interaction">
    <interactant intactId="EBI-7225021">
        <id>P03259-2</id>
    </interactant>
    <interactant intactId="EBI-476431">
        <id>P10644</id>
        <label>PRKAR1A</label>
    </interactant>
    <organismsDiffer>true</organismsDiffer>
    <experiments>5</experiments>
</comment>
<comment type="interaction">
    <interactant intactId="EBI-7225021">
        <id>P03259-2</id>
    </interactant>
    <interactant intactId="EBI-2556122">
        <id>P13861</id>
        <label>PRKAR2A</label>
    </interactant>
    <organismsDiffer>true</organismsDiffer>
    <experiments>5</experiments>
</comment>
<comment type="subcellular location">
    <subcellularLocation>
        <location evidence="3">Host nucleus</location>
    </subcellularLocation>
</comment>
<comment type="alternative products">
    <event type="alternative splicing"/>
    <isoform>
        <id>P03259-1</id>
        <name>Early E1A 29.5 kDa protein</name>
        <sequence type="displayed"/>
    </isoform>
    <isoform>
        <id>P03259-2</id>
        <name>Early E1A 26 kDa protein</name>
        <sequence type="described" ref="VSP_000201"/>
    </isoform>
    <isoform>
        <id>P03259-3</id>
        <name>Early E1A 22 kDa protein</name>
        <sequence type="described" ref="VSP_000202 VSP_000204"/>
    </isoform>
    <isoform>
        <id>P03259-4</id>
        <name>Early E1A 6 kDa protein</name>
        <sequence type="described" ref="VSP_000200 VSP_000203"/>
    </isoform>
</comment>
<comment type="similarity">
    <text evidence="8">Belongs to the adenoviridae E1A protein family.</text>
</comment>
<sequence>MRTEMTPLVLSYQEADDILEHLVDNFFNEVPSDDDLYVPSLYELYDLDVESAGEDNNEQAVNEFFPESLILAASEGLFLPEPPVLSPVCEPIGGECMPQLHPEDMDLLCYEMGFPCSDSEDEQDENGMAHVSASAAAAAADREREEFQLDHPELPGHNCKSCEHHRNSTGNTDLMCSLCYLRAYNMFIYSPVSDNEPEPNSTLDGDERPSPPKLGSAVPEGVIKPVPQRVTGRRRCAVESILDLIQEEEREQTVPVDLSVKRPRCN</sequence>
<feature type="chain" id="PRO_0000221696" description="Early E1A protein">
    <location>
        <begin position="1"/>
        <end position="266"/>
    </location>
</feature>
<feature type="zinc finger region" evidence="2">
    <location>
        <begin position="159"/>
        <end position="179"/>
    </location>
</feature>
<feature type="region of interest" description="Interaction with RB1 in competition with E2F1" evidence="1">
    <location>
        <begin position="39"/>
        <end position="47"/>
    </location>
</feature>
<feature type="region of interest" description="Interaction with UBE2I" evidence="7">
    <location>
        <begin position="75"/>
        <end position="145"/>
    </location>
</feature>
<feature type="region of interest" description="Disordered" evidence="5">
    <location>
        <begin position="195"/>
        <end position="226"/>
    </location>
</feature>
<feature type="short sequence motif" description="PXLXP motif, interaction with host ZMYND11" evidence="1">
    <location>
        <begin position="98"/>
        <end position="102"/>
    </location>
</feature>
<feature type="short sequence motif" description="LXCXE motif, interaction with host RB1 and TMEM173/STING" evidence="4">
    <location>
        <begin position="107"/>
        <end position="111"/>
    </location>
</feature>
<feature type="short sequence motif" description="PXDLS motif, CTBP-binding" evidence="1">
    <location>
        <begin position="255"/>
        <end position="259"/>
    </location>
</feature>
<feature type="short sequence motif" description="Nuclear localization signal" evidence="4">
    <location>
        <begin position="261"/>
        <end position="265"/>
    </location>
</feature>
<feature type="splice variant" id="VSP_000200" description="In isoform Early E1A 6 kDa protein." evidence="8">
    <location>
        <begin position="31"/>
        <end position="244"/>
    </location>
</feature>
<feature type="splice variant" id="VSP_000201" description="In isoform Early E1A 26 kDa protein." evidence="8">
    <location>
        <begin position="160"/>
        <end position="190"/>
    </location>
</feature>
<feature type="splice variant" id="VSP_000202" description="In isoform Early E1A 22 kDa protein." evidence="8">
    <location>
        <begin position="191"/>
        <end position="234"/>
    </location>
</feature>
<feature type="splice variant" id="VSP_000203" description="In isoform Early E1A 6 kDa protein." evidence="8">
    <original>IQEEEREQTVPVDLSVKRPRCN</original>
    <variation>FPIMSLNLIALWMAMSDPHPRN</variation>
    <location>
        <begin position="245"/>
        <end position="266"/>
    </location>
</feature>
<feature type="splice variant" id="VSP_000204" description="In isoform Early E1A 22 kDa protein." evidence="8">
    <original>SVKRPRCN</original>
    <variation>KCAMGGGR</variation>
    <location>
        <begin position="259"/>
        <end position="266"/>
    </location>
</feature>
<evidence type="ECO:0000250" key="1"/>
<evidence type="ECO:0000250" key="2">
    <source>
        <dbReference type="UniProtKB" id="P03254"/>
    </source>
</evidence>
<evidence type="ECO:0000250" key="3">
    <source>
        <dbReference type="UniProtKB" id="P03255"/>
    </source>
</evidence>
<evidence type="ECO:0000255" key="4"/>
<evidence type="ECO:0000256" key="5">
    <source>
        <dbReference type="SAM" id="MobiDB-lite"/>
    </source>
</evidence>
<evidence type="ECO:0000269" key="6">
    <source>
    </source>
</evidence>
<evidence type="ECO:0000269" key="7">
    <source>
    </source>
</evidence>
<evidence type="ECO:0000305" key="8"/>
<reference key="1">
    <citation type="journal article" date="1980" name="Cell">
        <title>Structure and gene organization in the transformed Hind III-G fragment of Ad12.</title>
        <authorList>
            <person name="Sugisaki H."/>
            <person name="Sugimoto K."/>
            <person name="Takanami M."/>
            <person name="Shiroki K."/>
            <person name="Saito I."/>
            <person name="Shimojo H."/>
            <person name="Sawada Y."/>
            <person name="Uemizu Y."/>
            <person name="Uesugi S."/>
            <person name="Fujinaga K."/>
        </authorList>
    </citation>
    <scope>NUCLEOTIDE SEQUENCE [GENOMIC DNA]</scope>
</reference>
<reference key="2">
    <citation type="journal article" date="1980" name="Nature">
        <title>Structure of two adenovirus type 12 transforming polypeptides and their evolutionary implications.</title>
        <authorList>
            <person name="Perricaudet M."/>
            <person name="le Moullec J.-M."/>
            <person name="Tiollais P."/>
            <person name="Pettersson U."/>
        </authorList>
    </citation>
    <scope>NUCLEOTIDE SEQUENCE [GENOMIC DNA]</scope>
</reference>
<reference key="3">
    <citation type="journal article" date="1994" name="J. Virol.">
        <title>Nucleotide sequence of human adenovirus type 12 DNA: comparative functional analysis.</title>
        <authorList>
            <person name="Sprengel J."/>
            <person name="Schmitz B."/>
            <person name="Heuss-Neitzel D."/>
            <person name="Zock C."/>
            <person name="Doerfler W."/>
        </authorList>
    </citation>
    <scope>NUCLEOTIDE SEQUENCE [LARGE SCALE GENOMIC DNA]</scope>
</reference>
<reference key="4">
    <citation type="journal article" date="1996" name="J. Biol. Chem.">
        <title>mUBC9, a novel adenovirus E1A-interacting protein that complements a yeast cell cycle defect.</title>
        <authorList>
            <person name="Hateboer G."/>
            <person name="Hijmans E.M."/>
            <person name="Nooij J.B.D."/>
            <person name="Schlenker S."/>
            <person name="Jentsch S."/>
            <person name="Bernards R."/>
        </authorList>
    </citation>
    <scope>INTERACTION WITH UBE2I</scope>
</reference>
<reference key="5">
    <citation type="journal article" date="2014" name="J. Virol.">
        <title>Adenovirus E1A targets the DREF nuclear factor to regulate virus gene expression, DNA replication, and growth.</title>
        <authorList>
            <person name="Radko S."/>
            <person name="Koleva M."/>
            <person name="James K.M."/>
            <person name="Jung R."/>
            <person name="Mymryk J.S."/>
            <person name="Pelka P."/>
        </authorList>
    </citation>
    <scope>INTERACTION WITH HUMAN ZBED1</scope>
</reference>
<accession>P03259</accession>
<organism>
    <name type="scientific">Human adenovirus A serotype 12</name>
    <name type="common">HAdV-12</name>
    <name type="synonym">Human adenovirus 12</name>
    <dbReference type="NCBI Taxonomy" id="28282"/>
    <lineage>
        <taxon>Viruses</taxon>
        <taxon>Varidnaviria</taxon>
        <taxon>Bamfordvirae</taxon>
        <taxon>Preplasmiviricota</taxon>
        <taxon>Tectiliviricetes</taxon>
        <taxon>Rowavirales</taxon>
        <taxon>Adenoviridae</taxon>
        <taxon>Mastadenovirus</taxon>
        <taxon>Human mastadenovirus A</taxon>
    </lineage>
</organism>
<name>E1A_ADE12</name>
<dbReference type="EMBL" id="V00004">
    <property type="protein sequence ID" value="CAA23400.1"/>
    <property type="molecule type" value="Genomic_DNA"/>
</dbReference>
<dbReference type="EMBL" id="V00004">
    <property type="protein sequence ID" value="CAA23401.1"/>
    <property type="molecule type" value="Genomic_DNA"/>
</dbReference>
<dbReference type="EMBL" id="V00004">
    <property type="protein sequence ID" value="CAA23402.1"/>
    <property type="molecule type" value="Genomic_DNA"/>
</dbReference>
<dbReference type="EMBL" id="X73487">
    <property type="protein sequence ID" value="CAA51877.1"/>
    <property type="molecule type" value="Genomic_DNA"/>
</dbReference>
<dbReference type="PIR" id="A03828">
    <property type="entry name" value="AQADG2"/>
</dbReference>
<dbReference type="RefSeq" id="NP_040910.2">
    <property type="nucleotide sequence ID" value="NC_001460.1"/>
</dbReference>
<dbReference type="IntAct" id="P03259">
    <property type="interactions" value="13"/>
</dbReference>
<dbReference type="MINT" id="P03259"/>
<dbReference type="GeneID" id="1460853"/>
<dbReference type="KEGG" id="vg:1460853"/>
<dbReference type="Proteomes" id="UP000004993">
    <property type="component" value="Genome"/>
</dbReference>
<dbReference type="GO" id="GO:0042025">
    <property type="term" value="C:host cell nucleus"/>
    <property type="evidence" value="ECO:0007669"/>
    <property type="project" value="UniProtKB-SubCell"/>
</dbReference>
<dbReference type="GO" id="GO:0140313">
    <property type="term" value="F:molecular sequestering activity"/>
    <property type="evidence" value="ECO:0000269"/>
    <property type="project" value="DisProt"/>
</dbReference>
<dbReference type="GO" id="GO:0008270">
    <property type="term" value="F:zinc ion binding"/>
    <property type="evidence" value="ECO:0007669"/>
    <property type="project" value="UniProtKB-KW"/>
</dbReference>
<dbReference type="GO" id="GO:0006355">
    <property type="term" value="P:regulation of DNA-templated transcription"/>
    <property type="evidence" value="ECO:0007669"/>
    <property type="project" value="InterPro"/>
</dbReference>
<dbReference type="GO" id="GO:0039645">
    <property type="term" value="P:symbiont-mediated perturbation of host cell cycle G1/S transition checkpoint"/>
    <property type="evidence" value="ECO:0007669"/>
    <property type="project" value="UniProtKB-KW"/>
</dbReference>
<dbReference type="GO" id="GO:0039648">
    <property type="term" value="P:symbiont-mediated perturbation of host ubiquitin-like protein modification"/>
    <property type="evidence" value="ECO:0007669"/>
    <property type="project" value="UniProtKB-KW"/>
</dbReference>
<dbReference type="GO" id="GO:0052170">
    <property type="term" value="P:symbiont-mediated suppression of host innate immune response"/>
    <property type="evidence" value="ECO:0007669"/>
    <property type="project" value="UniProtKB-KW"/>
</dbReference>
<dbReference type="GO" id="GO:0039563">
    <property type="term" value="P:symbiont-mediated suppression of host JAK-STAT cascade via inhibition of STAT1 activity"/>
    <property type="evidence" value="ECO:0007669"/>
    <property type="project" value="UniProtKB-KW"/>
</dbReference>
<dbReference type="GO" id="GO:0085034">
    <property type="term" value="P:symbiont-mediated suppression of host NF-kappaB cascade"/>
    <property type="evidence" value="ECO:0007669"/>
    <property type="project" value="UniProtKB-KW"/>
</dbReference>
<dbReference type="GO" id="GO:0039502">
    <property type="term" value="P:symbiont-mediated suppression of host type I interferon-mediated signaling pathway"/>
    <property type="evidence" value="ECO:0007669"/>
    <property type="project" value="UniProtKB-KW"/>
</dbReference>
<dbReference type="DisProt" id="DP01151"/>
<dbReference type="InterPro" id="IPR014410">
    <property type="entry name" value="Aden_E1A"/>
</dbReference>
<dbReference type="Pfam" id="PF02703">
    <property type="entry name" value="Adeno_E1A"/>
    <property type="match status" value="1"/>
</dbReference>
<dbReference type="PIRSF" id="PIRSF003669">
    <property type="entry name" value="Aden_E1A"/>
    <property type="match status" value="1"/>
</dbReference>
<keyword id="KW-0010">Activator</keyword>
<keyword id="KW-0025">Alternative splicing</keyword>
<keyword id="KW-0244">Early protein</keyword>
<keyword id="KW-1078">G1/S host cell cycle checkpoint dysregulation by virus</keyword>
<keyword id="KW-1048">Host nucleus</keyword>
<keyword id="KW-0945">Host-virus interaction</keyword>
<keyword id="KW-1090">Inhibition of host innate immune response by virus</keyword>
<keyword id="KW-1114">Inhibition of host interferon signaling pathway by virus</keyword>
<keyword id="KW-1100">Inhibition of host NF-kappa-B by virus</keyword>
<keyword id="KW-1105">Inhibition of host STAT1 by virus</keyword>
<keyword id="KW-0922">Interferon antiviral system evasion</keyword>
<keyword id="KW-0479">Metal-binding</keyword>
<keyword id="KW-1121">Modulation of host cell cycle by virus</keyword>
<keyword id="KW-1123">Modulation of host E3 ubiquitin ligases by virus</keyword>
<keyword id="KW-1130">Modulation of host ubiquitin pathway by virus</keyword>
<keyword id="KW-0553">Oncogene</keyword>
<keyword id="KW-1185">Reference proteome</keyword>
<keyword id="KW-0804">Transcription</keyword>
<keyword id="KW-0805">Transcription regulation</keyword>
<keyword id="KW-0899">Viral immunoevasion</keyword>
<keyword id="KW-0862">Zinc</keyword>
<keyword id="KW-0863">Zinc-finger</keyword>